<feature type="signal peptide" evidence="3">
    <location>
        <begin position="1"/>
        <end status="unknown"/>
    </location>
</feature>
<feature type="chain" id="PRO_0000226976" description="Protein sidekick-1">
    <location>
        <begin status="unknown"/>
        <end position="2193"/>
    </location>
</feature>
<feature type="topological domain" description="Extracellular" evidence="3">
    <location>
        <begin status="unknown"/>
        <end position="1991"/>
    </location>
</feature>
<feature type="transmembrane region" description="Helical" evidence="3">
    <location>
        <begin position="1992"/>
        <end position="2012"/>
    </location>
</feature>
<feature type="topological domain" description="Cytoplasmic" evidence="3">
    <location>
        <begin position="2013"/>
        <end position="2193"/>
    </location>
</feature>
<feature type="domain" description="Ig-like C2-type 1">
    <location>
        <begin position="86"/>
        <end position="168"/>
    </location>
</feature>
<feature type="domain" description="Ig-like C2-type 2">
    <location>
        <begin position="173"/>
        <end position="259"/>
    </location>
</feature>
<feature type="domain" description="Ig-like C2-type 3">
    <location>
        <begin position="275"/>
        <end position="363"/>
    </location>
</feature>
<feature type="domain" description="Ig-like C2-type 4">
    <location>
        <begin position="368"/>
        <end position="458"/>
    </location>
</feature>
<feature type="domain" description="Ig-like C2-type 5">
    <location>
        <begin position="462"/>
        <end position="551"/>
    </location>
</feature>
<feature type="domain" description="Ig-like C2-type 6">
    <location>
        <begin position="556"/>
        <end position="645"/>
    </location>
</feature>
<feature type="domain" description="Fibronectin type-III 1" evidence="5">
    <location>
        <begin position="652"/>
        <end position="748"/>
    </location>
</feature>
<feature type="domain" description="Fibronectin type-III 2" evidence="5">
    <location>
        <begin position="753"/>
        <end position="849"/>
    </location>
</feature>
<feature type="domain" description="Fibronectin type-III 3" evidence="5">
    <location>
        <begin position="854"/>
        <end position="952"/>
    </location>
</feature>
<feature type="domain" description="Fibronectin type-III 4" evidence="5">
    <location>
        <begin position="956"/>
        <end position="1050"/>
    </location>
</feature>
<feature type="domain" description="Fibronectin type-III 5" evidence="5">
    <location>
        <begin position="1054"/>
        <end position="1153"/>
    </location>
</feature>
<feature type="domain" description="Fibronectin type-III 6" evidence="5">
    <location>
        <begin position="1158"/>
        <end position="1256"/>
    </location>
</feature>
<feature type="domain" description="Fibronectin type-III 7" evidence="5">
    <location>
        <begin position="1261"/>
        <end position="1358"/>
    </location>
</feature>
<feature type="domain" description="Fibronectin type-III 8" evidence="5">
    <location>
        <begin position="1362"/>
        <end position="1456"/>
    </location>
</feature>
<feature type="domain" description="Fibronectin type-III 9" evidence="5">
    <location>
        <begin position="1461"/>
        <end position="1558"/>
    </location>
</feature>
<feature type="domain" description="Fibronectin type-III 10" evidence="5">
    <location>
        <begin position="1563"/>
        <end position="1681"/>
    </location>
</feature>
<feature type="domain" description="Fibronectin type-III 11" evidence="5">
    <location>
        <begin position="1686"/>
        <end position="1782"/>
    </location>
</feature>
<feature type="domain" description="Fibronectin type-III 12" evidence="5">
    <location>
        <begin position="1786"/>
        <end position="1881"/>
    </location>
</feature>
<feature type="domain" description="Fibronectin type-III 13" evidence="5">
    <location>
        <begin position="1884"/>
        <end position="1982"/>
    </location>
</feature>
<feature type="region of interest" description="Disordered" evidence="6">
    <location>
        <begin position="1"/>
        <end position="56"/>
    </location>
</feature>
<feature type="region of interest" description="Disordered" evidence="6">
    <location>
        <begin position="2057"/>
        <end position="2080"/>
    </location>
</feature>
<feature type="short sequence motif" description="PDZ-binding" evidence="1">
    <location>
        <begin position="2187"/>
        <end position="2193"/>
    </location>
</feature>
<feature type="compositionally biased region" description="Low complexity" evidence="6">
    <location>
        <begin position="1"/>
        <end position="23"/>
    </location>
</feature>
<feature type="glycosylation site" description="N-linked (GlcNAc...) asparagine" evidence="3">
    <location>
        <position position="123"/>
    </location>
</feature>
<feature type="glycosylation site" description="N-linked (GlcNAc...) asparagine" evidence="3">
    <location>
        <position position="253"/>
    </location>
</feature>
<feature type="glycosylation site" description="N-linked (GlcNAc...) asparagine" evidence="3">
    <location>
        <position position="283"/>
    </location>
</feature>
<feature type="glycosylation site" description="N-linked (GlcNAc...) asparagine" evidence="3">
    <location>
        <position position="532"/>
    </location>
</feature>
<feature type="glycosylation site" description="N-linked (GlcNAc...) asparagine" evidence="3">
    <location>
        <position position="545"/>
    </location>
</feature>
<feature type="glycosylation site" description="N-linked (GlcNAc...) asparagine" evidence="3">
    <location>
        <position position="554"/>
    </location>
</feature>
<feature type="glycosylation site" description="N-linked (GlcNAc...) asparagine" evidence="3">
    <location>
        <position position="764"/>
    </location>
</feature>
<feature type="glycosylation site" description="N-linked (GlcNAc...) asparagine" evidence="3">
    <location>
        <position position="803"/>
    </location>
</feature>
<feature type="glycosylation site" description="N-linked (GlcNAc...) asparagine" evidence="3">
    <location>
        <position position="864"/>
    </location>
</feature>
<feature type="glycosylation site" description="N-linked (GlcNAc...) asparagine" evidence="3">
    <location>
        <position position="997"/>
    </location>
</feature>
<feature type="glycosylation site" description="N-linked (GlcNAc...) asparagine" evidence="3">
    <location>
        <position position="1006"/>
    </location>
</feature>
<feature type="glycosylation site" description="N-linked (GlcNAc...) asparagine" evidence="3">
    <location>
        <position position="1264"/>
    </location>
</feature>
<feature type="glycosylation site" description="N-linked (GlcNAc...) asparagine" evidence="3">
    <location>
        <position position="1315"/>
    </location>
</feature>
<feature type="glycosylation site" description="N-linked (GlcNAc...) asparagine" evidence="3">
    <location>
        <position position="1636"/>
    </location>
</feature>
<feature type="glycosylation site" description="N-linked (GlcNAc...) asparagine" evidence="3">
    <location>
        <position position="1730"/>
    </location>
</feature>
<feature type="glycosylation site" description="N-linked (GlcNAc...) asparagine" evidence="3">
    <location>
        <position position="1801"/>
    </location>
</feature>
<feature type="glycosylation site" description="N-linked (GlcNAc...) asparagine" evidence="3">
    <location>
        <position position="1875"/>
    </location>
</feature>
<feature type="disulfide bond" evidence="4">
    <location>
        <begin position="108"/>
        <end position="151"/>
    </location>
</feature>
<feature type="disulfide bond" evidence="4">
    <location>
        <begin position="297"/>
        <end position="344"/>
    </location>
</feature>
<feature type="disulfide bond" evidence="4">
    <location>
        <begin position="390"/>
        <end position="440"/>
    </location>
</feature>
<feature type="disulfide bond" evidence="4">
    <location>
        <begin position="483"/>
        <end position="535"/>
    </location>
</feature>
<feature type="disulfide bond" evidence="4">
    <location>
        <begin position="577"/>
        <end position="629"/>
    </location>
</feature>
<feature type="splice variant" id="VSP_017520" description="In isoform 2." evidence="11">
    <location>
        <begin position="1"/>
        <end position="260"/>
    </location>
</feature>
<feature type="splice variant" id="VSP_017521" description="In isoform 2." evidence="11">
    <original>LSVAR</original>
    <variation>MDRSG</variation>
    <location>
        <begin position="261"/>
        <end position="265"/>
    </location>
</feature>
<feature type="mutagenesis site" description="Abolishes homophilic interactions." evidence="8">
    <location>
        <begin position="227"/>
        <end position="232"/>
    </location>
</feature>
<feature type="sequence conflict" description="In Ref. 1; AAQ57662." evidence="12" ref="1">
    <original>M</original>
    <variation>T</variation>
    <location>
        <position position="1009"/>
    </location>
</feature>
<feature type="sequence conflict" description="In Ref. 2; BAE28630." evidence="12" ref="2">
    <original>P</original>
    <variation>L</variation>
    <location>
        <position position="1888"/>
    </location>
</feature>
<feature type="sequence conflict" description="In Ref. 2; BAC28986." evidence="12" ref="2">
    <original>E</original>
    <variation>G</variation>
    <location>
        <position position="1957"/>
    </location>
</feature>
<feature type="sequence conflict" description="In Ref. 2; BAE28630." evidence="12" ref="2">
    <original>L</original>
    <variation>Q</variation>
    <location>
        <position position="2038"/>
    </location>
</feature>
<feature type="strand" evidence="17">
    <location>
        <begin position="87"/>
        <end position="90"/>
    </location>
</feature>
<feature type="strand" evidence="17">
    <location>
        <begin position="96"/>
        <end position="99"/>
    </location>
</feature>
<feature type="strand" evidence="17">
    <location>
        <begin position="104"/>
        <end position="107"/>
    </location>
</feature>
<feature type="strand" evidence="14">
    <location>
        <begin position="113"/>
        <end position="115"/>
    </location>
</feature>
<feature type="strand" evidence="17">
    <location>
        <begin position="117"/>
        <end position="122"/>
    </location>
</feature>
<feature type="strand" evidence="15">
    <location>
        <begin position="130"/>
        <end position="132"/>
    </location>
</feature>
<feature type="strand" evidence="17">
    <location>
        <begin position="135"/>
        <end position="140"/>
    </location>
</feature>
<feature type="helix" evidence="17">
    <location>
        <begin position="143"/>
        <end position="145"/>
    </location>
</feature>
<feature type="strand" evidence="17">
    <location>
        <begin position="147"/>
        <end position="154"/>
    </location>
</feature>
<feature type="strand" evidence="17">
    <location>
        <begin position="159"/>
        <end position="161"/>
    </location>
</feature>
<feature type="strand" evidence="17">
    <location>
        <begin position="165"/>
        <end position="172"/>
    </location>
</feature>
<feature type="strand" evidence="17">
    <location>
        <begin position="180"/>
        <end position="185"/>
    </location>
</feature>
<feature type="strand" evidence="17">
    <location>
        <begin position="190"/>
        <end position="192"/>
    </location>
</feature>
<feature type="strand" evidence="17">
    <location>
        <begin position="199"/>
        <end position="201"/>
    </location>
</feature>
<feature type="strand" evidence="17">
    <location>
        <begin position="204"/>
        <end position="209"/>
    </location>
</feature>
<feature type="strand" evidence="17">
    <location>
        <begin position="218"/>
        <end position="222"/>
    </location>
</feature>
<feature type="strand" evidence="17">
    <location>
        <begin position="228"/>
        <end position="230"/>
    </location>
</feature>
<feature type="helix" evidence="17">
    <location>
        <begin position="235"/>
        <end position="237"/>
    </location>
</feature>
<feature type="strand" evidence="17">
    <location>
        <begin position="239"/>
        <end position="246"/>
    </location>
</feature>
<feature type="turn" evidence="17">
    <location>
        <begin position="248"/>
        <end position="250"/>
    </location>
</feature>
<feature type="strand" evidence="17">
    <location>
        <begin position="253"/>
        <end position="255"/>
    </location>
</feature>
<feature type="strand" evidence="17">
    <location>
        <begin position="259"/>
        <end position="264"/>
    </location>
</feature>
<feature type="strand" evidence="14">
    <location>
        <begin position="267"/>
        <end position="269"/>
    </location>
</feature>
<feature type="strand" evidence="17">
    <location>
        <begin position="273"/>
        <end position="279"/>
    </location>
</feature>
<feature type="strand" evidence="17">
    <location>
        <begin position="284"/>
        <end position="287"/>
    </location>
</feature>
<feature type="strand" evidence="17">
    <location>
        <begin position="291"/>
        <end position="296"/>
    </location>
</feature>
<feature type="strand" evidence="17">
    <location>
        <begin position="298"/>
        <end position="303"/>
    </location>
</feature>
<feature type="helix" evidence="17">
    <location>
        <begin position="304"/>
        <end position="306"/>
    </location>
</feature>
<feature type="strand" evidence="17">
    <location>
        <begin position="307"/>
        <end position="313"/>
    </location>
</feature>
<feature type="strand" evidence="17">
    <location>
        <begin position="320"/>
        <end position="323"/>
    </location>
</feature>
<feature type="turn" evidence="17">
    <location>
        <begin position="324"/>
        <end position="327"/>
    </location>
</feature>
<feature type="strand" evidence="17">
    <location>
        <begin position="328"/>
        <end position="333"/>
    </location>
</feature>
<feature type="helix" evidence="17">
    <location>
        <begin position="336"/>
        <end position="338"/>
    </location>
</feature>
<feature type="strand" evidence="17">
    <location>
        <begin position="340"/>
        <end position="348"/>
    </location>
</feature>
<feature type="strand" evidence="17">
    <location>
        <begin position="356"/>
        <end position="372"/>
    </location>
</feature>
<feature type="strand" evidence="17">
    <location>
        <begin position="376"/>
        <end position="381"/>
    </location>
</feature>
<feature type="strand" evidence="17">
    <location>
        <begin position="386"/>
        <end position="388"/>
    </location>
</feature>
<feature type="strand" evidence="17">
    <location>
        <begin position="391"/>
        <end position="396"/>
    </location>
</feature>
<feature type="strand" evidence="17">
    <location>
        <begin position="399"/>
        <end position="404"/>
    </location>
</feature>
<feature type="helix" evidence="17">
    <location>
        <begin position="409"/>
        <end position="412"/>
    </location>
</feature>
<feature type="strand" evidence="17">
    <location>
        <begin position="417"/>
        <end position="419"/>
    </location>
</feature>
<feature type="strand" evidence="17">
    <location>
        <begin position="425"/>
        <end position="429"/>
    </location>
</feature>
<feature type="helix" evidence="17">
    <location>
        <begin position="432"/>
        <end position="434"/>
    </location>
</feature>
<feature type="strand" evidence="17">
    <location>
        <begin position="436"/>
        <end position="444"/>
    </location>
</feature>
<feature type="strand" evidence="17">
    <location>
        <begin position="447"/>
        <end position="458"/>
    </location>
</feature>
<feature type="strand" evidence="16">
    <location>
        <begin position="460"/>
        <end position="466"/>
    </location>
</feature>
<feature type="strand" evidence="16">
    <location>
        <begin position="471"/>
        <end position="474"/>
    </location>
</feature>
<feature type="strand" evidence="16">
    <location>
        <begin position="479"/>
        <end position="482"/>
    </location>
</feature>
<feature type="strand" evidence="16">
    <location>
        <begin position="484"/>
        <end position="489"/>
    </location>
</feature>
<feature type="strand" evidence="16">
    <location>
        <begin position="492"/>
        <end position="497"/>
    </location>
</feature>
<feature type="strand" evidence="16">
    <location>
        <begin position="500"/>
        <end position="503"/>
    </location>
</feature>
<feature type="helix" evidence="16">
    <location>
        <begin position="510"/>
        <end position="512"/>
    </location>
</feature>
<feature type="strand" evidence="16">
    <location>
        <begin position="513"/>
        <end position="516"/>
    </location>
</feature>
<feature type="strand" evidence="16">
    <location>
        <begin position="519"/>
        <end position="524"/>
    </location>
</feature>
<feature type="helix" evidence="16">
    <location>
        <begin position="527"/>
        <end position="529"/>
    </location>
</feature>
<feature type="strand" evidence="16">
    <location>
        <begin position="531"/>
        <end position="538"/>
    </location>
</feature>
<feature type="strand" evidence="16">
    <location>
        <begin position="543"/>
        <end position="553"/>
    </location>
</feature>
<name>SDK1_MOUSE</name>
<protein>
    <recommendedName>
        <fullName evidence="11">Protein sidekick-1</fullName>
    </recommendedName>
</protein>
<accession>Q3UH53</accession>
<accession>Q3UFD1</accession>
<accession>Q6PAL2</accession>
<accession>Q6V3A4</accession>
<accession>Q8BMC2</accession>
<accession>Q8BZI1</accession>
<evidence type="ECO:0000250" key="1">
    <source>
        <dbReference type="UniProtKB" id="Q6V4S5"/>
    </source>
</evidence>
<evidence type="ECO:0000250" key="2">
    <source>
        <dbReference type="UniProtKB" id="Q8AV58"/>
    </source>
</evidence>
<evidence type="ECO:0000255" key="3"/>
<evidence type="ECO:0000255" key="4">
    <source>
        <dbReference type="PROSITE-ProRule" id="PRU00114"/>
    </source>
</evidence>
<evidence type="ECO:0000255" key="5">
    <source>
        <dbReference type="PROSITE-ProRule" id="PRU00316"/>
    </source>
</evidence>
<evidence type="ECO:0000256" key="6">
    <source>
        <dbReference type="SAM" id="MobiDB-lite"/>
    </source>
</evidence>
<evidence type="ECO:0000269" key="7">
    <source>
    </source>
</evidence>
<evidence type="ECO:0000269" key="8">
    <source>
    </source>
</evidence>
<evidence type="ECO:0000269" key="9">
    <source>
    </source>
</evidence>
<evidence type="ECO:0000269" key="10">
    <source>
    </source>
</evidence>
<evidence type="ECO:0000303" key="11">
    <source>
    </source>
</evidence>
<evidence type="ECO:0000305" key="12"/>
<evidence type="ECO:0000312" key="13">
    <source>
        <dbReference type="MGI" id="MGI:2444413"/>
    </source>
</evidence>
<evidence type="ECO:0007829" key="14">
    <source>
        <dbReference type="PDB" id="5K6U"/>
    </source>
</evidence>
<evidence type="ECO:0007829" key="15">
    <source>
        <dbReference type="PDB" id="5K6V"/>
    </source>
</evidence>
<evidence type="ECO:0007829" key="16">
    <source>
        <dbReference type="PDB" id="5K6W"/>
    </source>
</evidence>
<evidence type="ECO:0007829" key="17">
    <source>
        <dbReference type="PDB" id="5XWX"/>
    </source>
</evidence>
<proteinExistence type="evidence at protein level"/>
<sequence>MARARPSVAGGGVAAPPERAGPGRPRRSRTGHHCDPECPGLRAAPRTPGPGAGRRAAKLRPGRGWWALLLLQLHLLRALAQDDVAPYFKTEPGLPQIHLEGNRLVLTCLAEGSWPLEFKWIRNDSELTTYSSEYKYIIPSLQKLDAGFYRCVVRNRMGALLQRKSEIQVAYMGNFMDTDQRKTVSQGHAALLNLLPIVSCPQPQVTWFREGHKIIPSSRIAITLENQLVILATTASDAGAYYVQAVNEKNGENKTSPFIHLSVARDTGTHEAMAPIIVVAPGNRSVVAGSSETTLECIANARPVEELSVHWKRNGVRLTSGLHSYGRRLTITNPTSADTGMYVCEATLRGSTFEPARARAFLSIIEPPYFTAEPESRILGEVEETMDIPCRAMGVPLPTLQWYKDAVPLSKLQNPRYKVLPSGGLHIQKLSPEDSGIFQCFASNEGGEVQTHTYLDVTNIAPAFTQRPVDTTVTDGMTAVLRCEVSGAPKPAITWKRGNHILASGSVRIPRFMLLESGGLRIAPVFIQDAGNYTCYAANTEASVNASAMLTVWNRTSIVHPPEDRVVIKGTTATLCCGATHDPRTSLRYVWKKDNVVITASSSSRIVVEKDGSLVISQTWSGDIGDYTCEIISEGGSDSRTARLEVIELPHPPQNLLASLSPARSHSVTLSWVRPFDGNSPVLYYIVQVSENNSPWKVHLSNVGPEMTGVTVSGLTPARTYQFRVCAVNQVGKGQYSTETSRLMLPEEPPSAPPKNIVASGRTNQSIMVQWQPPPETEHNGVLRGYILRYRLAGLPGEHQQRNISSPEVNYCLVTDLIIWTQYEIQVAAYNGAGLGVFSRAVTEYTLQGVPTAPPQNVQAEAVNSTTVHFLWNPPPQQFINGINQGYKLLAWPADAPETVTVVTIAPDFHGIHHGYITNLKKFTAYFTSVLCFTTPGDGPPSSPQLVWTHEDKPGAVGHLSFTEILDTSLKVSWQEPLERNGIIMGYQISWEVYGRNDSRLTHTLNSTMHEYKIQGLSSLTTYTIDVAALTAAGVGVTTSSTISSGVPPDLPGAPSNLVISNISPRSATLQFRPGYDGKTAICRWIVEGQVGAIGDEEEWVTLYEEENEPDAQMLEIPNLTPYTHYRFRMRQVNIVGPSPFSQSSRVIQTLQAPPDVAPTSLTVRTASETSLRLRWVPLPDSQYNGNPESVGYRVKYWRSDQPSSALAQVVSDRLERELTIEELEEWTEYELRMQAFNAIGAGPWSELVRGRTRESVPSAAPENVSAEAVSSTQILLTWASVPEQDQNGLILGYKVLYCAKDLDPEPRSHVVRGNHTQSALLAGLRKFVVYELQVLAFTRIGNGVPSSPLILERTKDDTPGPPVRLVFPEVRLTAVRIVWQPPEEPNGVILGYQIAYRLASGSPHTFTTVEVGATVRQFTATELAPESAYIFRLSAKTRQGWGEPLEATVITTEKRERPAPPRELLVPQAEVTARSLRLQWVPGSDGASPIRYFTVQVRELPGGEWQTYSSSISHEATACAVERLRPFTSYKLRLKATNDIGDSDFSAETEAVTTLQDVPGEPPGSVSATPHTTSSVLIQWQPPRDESLNGLLQGYRIYYRELESETGMSPEPKTLKSPSALRAELTAQSSFKTVNSSSSLTTYELTHLKKYRRYEVIMTAYNIIGESPASVPVEVFVGEAAPAMAPQNVQVTPLTASQLEVTWDPPPPESQNGNIQGYKVYYWEADSRNETEKMKVLFLPEPVVKIKDLTSHTKYLISISAFNAAGDGPKSDPCQGRTHQAAPGPPSFLAFSEITSTTLNVSWGEPSAANGILQGYRVVYEPLAPVQGVSKVVTVDVKGNWQRWLKVRDLTKGVTYFFRVQARTIAYGPELQANVTAGPAEGSPGSPRNVLVTKSASELTLQWTEGNAGTTPTTGYVIEARPSDEGLWDMFAKDIPRSATSYTVDLDKLRQGVTYEFRVVAVNKAGFGEPSRPSIAVSAQAEAPFYEEWWFLLVMALSSLLLILLVVFVLVLHGQSKKYKSCSTGKGISNMEETVTLDNGGFAALELNSRHLNVKSTFSKKNGTRSPPRPSPGGLHYSDEDICNKYNGAVLTESVNLKEKSVDGSESEASDSDYEEALPKHSFVNHYMSDPTYYNSWKRRPPAAAPHRYEAVAGAEAGPHLHTVITTQSAGGVYTPAGPGARAPLTGFSSFV</sequence>
<organism>
    <name type="scientific">Mus musculus</name>
    <name type="common">Mouse</name>
    <dbReference type="NCBI Taxonomy" id="10090"/>
    <lineage>
        <taxon>Eukaryota</taxon>
        <taxon>Metazoa</taxon>
        <taxon>Chordata</taxon>
        <taxon>Craniata</taxon>
        <taxon>Vertebrata</taxon>
        <taxon>Euteleostomi</taxon>
        <taxon>Mammalia</taxon>
        <taxon>Eutheria</taxon>
        <taxon>Euarchontoglires</taxon>
        <taxon>Glires</taxon>
        <taxon>Rodentia</taxon>
        <taxon>Myomorpha</taxon>
        <taxon>Muroidea</taxon>
        <taxon>Muridae</taxon>
        <taxon>Murinae</taxon>
        <taxon>Mus</taxon>
        <taxon>Mus</taxon>
    </lineage>
</organism>
<gene>
    <name evidence="11 13" type="primary">Sdk1</name>
</gene>
<keyword id="KW-0002">3D-structure</keyword>
<keyword id="KW-0025">Alternative splicing</keyword>
<keyword id="KW-0130">Cell adhesion</keyword>
<keyword id="KW-1003">Cell membrane</keyword>
<keyword id="KW-1015">Disulfide bond</keyword>
<keyword id="KW-0325">Glycoprotein</keyword>
<keyword id="KW-0393">Immunoglobulin domain</keyword>
<keyword id="KW-0472">Membrane</keyword>
<keyword id="KW-1185">Reference proteome</keyword>
<keyword id="KW-0677">Repeat</keyword>
<keyword id="KW-0732">Signal</keyword>
<keyword id="KW-0770">Synapse</keyword>
<keyword id="KW-0812">Transmembrane</keyword>
<keyword id="KW-1133">Transmembrane helix</keyword>
<dbReference type="EMBL" id="AY353236">
    <property type="protein sequence ID" value="AAQ57662.1"/>
    <property type="molecule type" value="mRNA"/>
</dbReference>
<dbReference type="EMBL" id="AK032883">
    <property type="protein sequence ID" value="BAC28069.1"/>
    <property type="status" value="ALT_INIT"/>
    <property type="molecule type" value="mRNA"/>
</dbReference>
<dbReference type="EMBL" id="AK035225">
    <property type="protein sequence ID" value="BAC28986.1"/>
    <property type="status" value="ALT_INIT"/>
    <property type="molecule type" value="mRNA"/>
</dbReference>
<dbReference type="EMBL" id="AK147578">
    <property type="protein sequence ID" value="BAE28004.1"/>
    <property type="molecule type" value="mRNA"/>
</dbReference>
<dbReference type="EMBL" id="AK148648">
    <property type="protein sequence ID" value="BAE28630.1"/>
    <property type="molecule type" value="mRNA"/>
</dbReference>
<dbReference type="EMBL" id="BC060237">
    <property type="protein sequence ID" value="AAH60237.1"/>
    <property type="molecule type" value="mRNA"/>
</dbReference>
<dbReference type="CCDS" id="CCDS39360.2">
    <molecule id="Q3UH53-1"/>
</dbReference>
<dbReference type="RefSeq" id="NP_808547.3">
    <molecule id="Q3UH53-1"/>
    <property type="nucleotide sequence ID" value="NM_177879.5"/>
</dbReference>
<dbReference type="PDB" id="5K6U">
    <property type="method" value="X-ray"/>
    <property type="resolution" value="2.20 A"/>
    <property type="chains" value="A=78-459"/>
</dbReference>
<dbReference type="PDB" id="5K6V">
    <property type="method" value="X-ray"/>
    <property type="resolution" value="3.21 A"/>
    <property type="chains" value="A=78-459"/>
</dbReference>
<dbReference type="PDB" id="5K6W">
    <property type="method" value="X-ray"/>
    <property type="resolution" value="3.50 A"/>
    <property type="chains" value="A/B=78-556"/>
</dbReference>
<dbReference type="PDB" id="5K6Z">
    <property type="method" value="X-ray"/>
    <property type="resolution" value="2.70 A"/>
    <property type="chains" value="A/B=268-459"/>
</dbReference>
<dbReference type="PDB" id="5XWX">
    <property type="method" value="X-ray"/>
    <property type="resolution" value="1.55 A"/>
    <property type="chains" value="A/B=1-458"/>
</dbReference>
<dbReference type="PDBsum" id="5K6U"/>
<dbReference type="PDBsum" id="5K6V"/>
<dbReference type="PDBsum" id="5K6W"/>
<dbReference type="PDBsum" id="5K6Z"/>
<dbReference type="PDBsum" id="5XWX"/>
<dbReference type="SMR" id="Q3UH53"/>
<dbReference type="BioGRID" id="236924">
    <property type="interactions" value="1"/>
</dbReference>
<dbReference type="FunCoup" id="Q3UH53">
    <property type="interactions" value="817"/>
</dbReference>
<dbReference type="STRING" id="10090.ENSMUSP00000082928"/>
<dbReference type="GlyConnect" id="2644">
    <property type="glycosylation" value="1 N-Linked glycan (2 sites)"/>
</dbReference>
<dbReference type="GlyCosmos" id="Q3UH53">
    <property type="glycosylation" value="17 sites, 1 glycan"/>
</dbReference>
<dbReference type="GlyGen" id="Q3UH53">
    <property type="glycosylation" value="18 sites, 8 N-linked glycans (7 sites), 1 O-linked glycan (1 site)"/>
</dbReference>
<dbReference type="iPTMnet" id="Q3UH53"/>
<dbReference type="PhosphoSitePlus" id="Q3UH53"/>
<dbReference type="jPOST" id="Q3UH53"/>
<dbReference type="PaxDb" id="10090-ENSMUSP00000082928"/>
<dbReference type="PeptideAtlas" id="Q3UH53"/>
<dbReference type="ProteomicsDB" id="257111">
    <molecule id="Q3UH53-1"/>
</dbReference>
<dbReference type="ProteomicsDB" id="257112">
    <molecule id="Q3UH53-2"/>
</dbReference>
<dbReference type="Antibodypedia" id="2506">
    <property type="antibodies" value="30 antibodies from 16 providers"/>
</dbReference>
<dbReference type="DNASU" id="330222"/>
<dbReference type="Ensembl" id="ENSMUST00000074546.7">
    <molecule id="Q3UH53-2"/>
    <property type="protein sequence ID" value="ENSMUSP00000074133.7"/>
    <property type="gene ID" value="ENSMUSG00000039683.17"/>
</dbReference>
<dbReference type="Ensembl" id="ENSMUST00000085774.11">
    <molecule id="Q3UH53-1"/>
    <property type="protein sequence ID" value="ENSMUSP00000082928.5"/>
    <property type="gene ID" value="ENSMUSG00000039683.17"/>
</dbReference>
<dbReference type="GeneID" id="330222"/>
<dbReference type="KEGG" id="mmu:330222"/>
<dbReference type="UCSC" id="uc009ail.2">
    <molecule id="Q3UH53-1"/>
    <property type="organism name" value="mouse"/>
</dbReference>
<dbReference type="UCSC" id="uc009ain.2">
    <molecule id="Q3UH53-2"/>
    <property type="organism name" value="mouse"/>
</dbReference>
<dbReference type="AGR" id="MGI:2444413"/>
<dbReference type="CTD" id="221935"/>
<dbReference type="MGI" id="MGI:2444413">
    <property type="gene designation" value="Sdk1"/>
</dbReference>
<dbReference type="VEuPathDB" id="HostDB:ENSMUSG00000039683"/>
<dbReference type="eggNOG" id="KOG3510">
    <property type="taxonomic scope" value="Eukaryota"/>
</dbReference>
<dbReference type="GeneTree" id="ENSGT00940000157747"/>
<dbReference type="HOGENOM" id="CLU_001875_1_0_1"/>
<dbReference type="InParanoid" id="Q3UH53"/>
<dbReference type="OMA" id="ECIANAX"/>
<dbReference type="OrthoDB" id="8923679at2759"/>
<dbReference type="PhylomeDB" id="Q3UH53"/>
<dbReference type="TreeFam" id="TF316846"/>
<dbReference type="Reactome" id="R-MMU-373756">
    <property type="pathway name" value="SDK interactions"/>
</dbReference>
<dbReference type="BioGRID-ORCS" id="330222">
    <property type="hits" value="0 hits in 79 CRISPR screens"/>
</dbReference>
<dbReference type="ChiTaRS" id="Sdk1">
    <property type="organism name" value="mouse"/>
</dbReference>
<dbReference type="PRO" id="PR:Q3UH53"/>
<dbReference type="Proteomes" id="UP000000589">
    <property type="component" value="Chromosome 5"/>
</dbReference>
<dbReference type="RNAct" id="Q3UH53">
    <property type="molecule type" value="protein"/>
</dbReference>
<dbReference type="Bgee" id="ENSMUSG00000039683">
    <property type="expression patterns" value="Expressed in otolith organ and 115 other cell types or tissues"/>
</dbReference>
<dbReference type="GO" id="GO:0005886">
    <property type="term" value="C:plasma membrane"/>
    <property type="evidence" value="ECO:0007669"/>
    <property type="project" value="UniProtKB-SubCell"/>
</dbReference>
<dbReference type="GO" id="GO:0045202">
    <property type="term" value="C:synapse"/>
    <property type="evidence" value="ECO:0000250"/>
    <property type="project" value="UniProtKB"/>
</dbReference>
<dbReference type="GO" id="GO:0042802">
    <property type="term" value="F:identical protein binding"/>
    <property type="evidence" value="ECO:0000250"/>
    <property type="project" value="UniProtKB"/>
</dbReference>
<dbReference type="GO" id="GO:0048148">
    <property type="term" value="P:behavioral response to cocaine"/>
    <property type="evidence" value="ECO:0000314"/>
    <property type="project" value="MGI"/>
</dbReference>
<dbReference type="GO" id="GO:0007156">
    <property type="term" value="P:homophilic cell adhesion via plasma membrane adhesion molecules"/>
    <property type="evidence" value="ECO:0000250"/>
    <property type="project" value="UniProtKB"/>
</dbReference>
<dbReference type="GO" id="GO:0060998">
    <property type="term" value="P:regulation of dendritic spine development"/>
    <property type="evidence" value="ECO:0000314"/>
    <property type="project" value="MGI"/>
</dbReference>
<dbReference type="GO" id="GO:0010842">
    <property type="term" value="P:retina layer formation"/>
    <property type="evidence" value="ECO:0000250"/>
    <property type="project" value="UniProtKB"/>
</dbReference>
<dbReference type="GO" id="GO:0007416">
    <property type="term" value="P:synapse assembly"/>
    <property type="evidence" value="ECO:0000250"/>
    <property type="project" value="UniProtKB"/>
</dbReference>
<dbReference type="CDD" id="cd00063">
    <property type="entry name" value="FN3"/>
    <property type="match status" value="13"/>
</dbReference>
<dbReference type="CDD" id="cd00096">
    <property type="entry name" value="Ig"/>
    <property type="match status" value="1"/>
</dbReference>
<dbReference type="FunFam" id="2.60.40.10:FF:000202">
    <property type="entry name" value="Sidekick cell adhesion molecule 1"/>
    <property type="match status" value="1"/>
</dbReference>
<dbReference type="FunFam" id="2.60.40.10:FF:000253">
    <property type="entry name" value="Sidekick cell adhesion molecule 1"/>
    <property type="match status" value="1"/>
</dbReference>
<dbReference type="FunFam" id="2.60.40.10:FF:000158">
    <property type="entry name" value="Sidekick cell adhesion molecule 2"/>
    <property type="match status" value="1"/>
</dbReference>
<dbReference type="FunFam" id="2.60.40.10:FF:000177">
    <property type="entry name" value="Sidekick cell adhesion molecule 2"/>
    <property type="match status" value="1"/>
</dbReference>
<dbReference type="FunFam" id="2.60.40.10:FF:000206">
    <property type="entry name" value="Sidekick cell adhesion molecule 2"/>
    <property type="match status" value="1"/>
</dbReference>
<dbReference type="FunFam" id="2.60.40.10:FF:000209">
    <property type="entry name" value="Sidekick cell adhesion molecule 2"/>
    <property type="match status" value="1"/>
</dbReference>
<dbReference type="FunFam" id="2.60.40.10:FF:000231">
    <property type="entry name" value="Sidekick cell adhesion molecule 2"/>
    <property type="match status" value="1"/>
</dbReference>
<dbReference type="FunFam" id="2.60.40.10:FF:000236">
    <property type="entry name" value="Sidekick cell adhesion molecule 2"/>
    <property type="match status" value="1"/>
</dbReference>
<dbReference type="FunFam" id="2.60.40.10:FF:000237">
    <property type="entry name" value="Sidekick cell adhesion molecule 2"/>
    <property type="match status" value="1"/>
</dbReference>
<dbReference type="FunFam" id="2.60.40.10:FF:000261">
    <property type="entry name" value="Sidekick cell adhesion molecule 2"/>
    <property type="match status" value="1"/>
</dbReference>
<dbReference type="FunFam" id="2.60.40.10:FF:000266">
    <property type="entry name" value="Sidekick cell adhesion molecule 2"/>
    <property type="match status" value="1"/>
</dbReference>
<dbReference type="FunFam" id="2.60.40.10:FF:000267">
    <property type="entry name" value="Sidekick cell adhesion molecule 2"/>
    <property type="match status" value="1"/>
</dbReference>
<dbReference type="FunFam" id="2.60.40.10:FF:000271">
    <property type="entry name" value="Sidekick cell adhesion molecule 2"/>
    <property type="match status" value="1"/>
</dbReference>
<dbReference type="FunFam" id="2.60.40.10:FF:000301">
    <property type="entry name" value="Sidekick cell adhesion molecule 2"/>
    <property type="match status" value="1"/>
</dbReference>
<dbReference type="FunFam" id="2.60.40.10:FF:000359">
    <property type="entry name" value="Sidekick cell adhesion molecule 2"/>
    <property type="match status" value="1"/>
</dbReference>
<dbReference type="FunFam" id="2.60.40.10:FF:000360">
    <property type="entry name" value="Sidekick cell adhesion molecule 2"/>
    <property type="match status" value="1"/>
</dbReference>
<dbReference type="FunFam" id="2.60.40.10:FF:000420">
    <property type="entry name" value="Sidekick cell adhesion molecule 2"/>
    <property type="match status" value="1"/>
</dbReference>
<dbReference type="FunFam" id="2.60.40.10:FF:000434">
    <property type="entry name" value="Sidekick cell adhesion molecule 2"/>
    <property type="match status" value="1"/>
</dbReference>
<dbReference type="FunFam" id="2.60.40.10:FF:000485">
    <property type="entry name" value="Sidekick cell adhesion molecule 2"/>
    <property type="match status" value="1"/>
</dbReference>
<dbReference type="Gene3D" id="2.60.40.10">
    <property type="entry name" value="Immunoglobulins"/>
    <property type="match status" value="19"/>
</dbReference>
<dbReference type="InterPro" id="IPR003961">
    <property type="entry name" value="FN3_dom"/>
</dbReference>
<dbReference type="InterPro" id="IPR036116">
    <property type="entry name" value="FN3_sf"/>
</dbReference>
<dbReference type="InterPro" id="IPR007110">
    <property type="entry name" value="Ig-like_dom"/>
</dbReference>
<dbReference type="InterPro" id="IPR036179">
    <property type="entry name" value="Ig-like_dom_sf"/>
</dbReference>
<dbReference type="InterPro" id="IPR013783">
    <property type="entry name" value="Ig-like_fold"/>
</dbReference>
<dbReference type="InterPro" id="IPR013098">
    <property type="entry name" value="Ig_I-set"/>
</dbReference>
<dbReference type="InterPro" id="IPR003599">
    <property type="entry name" value="Ig_sub"/>
</dbReference>
<dbReference type="InterPro" id="IPR003598">
    <property type="entry name" value="Ig_sub2"/>
</dbReference>
<dbReference type="InterPro" id="IPR050964">
    <property type="entry name" value="Striated_Muscle_Regulatory"/>
</dbReference>
<dbReference type="PANTHER" id="PTHR13817:SF166">
    <property type="entry name" value="NEURONAL IGCAM-RELATED"/>
    <property type="match status" value="1"/>
</dbReference>
<dbReference type="PANTHER" id="PTHR13817">
    <property type="entry name" value="TITIN"/>
    <property type="match status" value="1"/>
</dbReference>
<dbReference type="Pfam" id="PF00041">
    <property type="entry name" value="fn3"/>
    <property type="match status" value="13"/>
</dbReference>
<dbReference type="Pfam" id="PF07679">
    <property type="entry name" value="I-set"/>
    <property type="match status" value="4"/>
</dbReference>
<dbReference type="Pfam" id="PF13927">
    <property type="entry name" value="Ig_3"/>
    <property type="match status" value="2"/>
</dbReference>
<dbReference type="PRINTS" id="PR00014">
    <property type="entry name" value="FNTYPEIII"/>
</dbReference>
<dbReference type="SMART" id="SM00060">
    <property type="entry name" value="FN3"/>
    <property type="match status" value="13"/>
</dbReference>
<dbReference type="SMART" id="SM00409">
    <property type="entry name" value="IG"/>
    <property type="match status" value="6"/>
</dbReference>
<dbReference type="SMART" id="SM00408">
    <property type="entry name" value="IGc2"/>
    <property type="match status" value="5"/>
</dbReference>
<dbReference type="SUPFAM" id="SSF49265">
    <property type="entry name" value="Fibronectin type III"/>
    <property type="match status" value="7"/>
</dbReference>
<dbReference type="SUPFAM" id="SSF48726">
    <property type="entry name" value="Immunoglobulin"/>
    <property type="match status" value="5"/>
</dbReference>
<dbReference type="PROSITE" id="PS50853">
    <property type="entry name" value="FN3"/>
    <property type="match status" value="13"/>
</dbReference>
<dbReference type="PROSITE" id="PS50835">
    <property type="entry name" value="IG_LIKE"/>
    <property type="match status" value="5"/>
</dbReference>
<comment type="function">
    <text evidence="2">Adhesion molecule that promotes lamina-specific synaptic connections in the retina. Expressed in specific subsets of interneurons and retinal ganglion cells (RGCs) and promotes synaptic connectivity via homophilic interactions.</text>
</comment>
<comment type="subunit">
    <text evidence="8 9">Homodimer; mediates homophilic interactions to promote cell adhesion (PubMed:15703275). Interacts (via PDZ-binding motif) with MAGI1, MAGI2, DLG2, DLG3 and DLG4 (PubMed:20219992).</text>
</comment>
<comment type="subunit">
    <molecule>Isoform 2</molecule>
    <text evidence="8">Does not mediate homophilic interactions (PubMed:15703275).</text>
</comment>
<comment type="subcellular location">
    <subcellularLocation>
        <location evidence="2">Cell membrane</location>
        <topology evidence="2">Single-pass type I membrane protein</topology>
    </subcellularLocation>
    <subcellularLocation>
        <location evidence="9">Synapse</location>
    </subcellularLocation>
</comment>
<comment type="alternative products">
    <event type="alternative splicing"/>
    <isoform>
        <id>Q3UH53-1</id>
        <name>1</name>
        <sequence type="displayed"/>
    </isoform>
    <isoform>
        <id>Q3UH53-2</id>
        <name>2</name>
        <sequence type="described" ref="VSP_017520 VSP_017521"/>
    </isoform>
</comment>
<comment type="tissue specificity">
    <text evidence="10">Expressed by non-overlapping subsets of retinal neurons. Sdk1 and Sdk2 are expressed in non-overlapping subsets of interneurons and retinal ganglion cells (RGCs) that form synapses in distinct inner plexiform layer (IPL) sublaminae (at protein level).</text>
</comment>
<comment type="developmental stage">
    <text evidence="7">Highly expressed in many fetal tissues, inlcuding kidney but shows markedly lower expression in adult organs. Expression in kidney is high throughout development with maximal expression occurring near birth.</text>
</comment>
<comment type="domain">
    <text evidence="1">The PDZ-binding motif mediates interaction with PDZ domain-containing proteins MAGI1, MAGI2, DLG2, DLG3 and DLG4 and is required for is required for synaptic localization in photoreceptors.</text>
</comment>
<comment type="domain">
    <text evidence="8">Ig-like C2-type domains 1 and 2 mediate homophilic interactions.</text>
</comment>
<comment type="similarity">
    <text evidence="12">Belongs to the sidekick family.</text>
</comment>
<comment type="sequence caution" evidence="12">
    <conflict type="erroneous initiation">
        <sequence resource="EMBL-CDS" id="BAC28069"/>
    </conflict>
</comment>
<comment type="sequence caution" evidence="12">
    <conflict type="erroneous initiation">
        <sequence resource="EMBL-CDS" id="BAC28986"/>
    </conflict>
</comment>
<reference key="1">
    <citation type="journal article" date="2004" name="J. Am. Soc. Nephrol.">
        <title>Sidekick-1 is upregulated in glomeruli in HIV-associated nephropathy.</title>
        <authorList>
            <person name="Kaufman L."/>
            <person name="Hayashi K."/>
            <person name="Ross M.J."/>
            <person name="Ross M.D."/>
            <person name="Klotman P.E."/>
        </authorList>
    </citation>
    <scope>NUCLEOTIDE SEQUENCE [MRNA] (ISOFORMS 1 AND 2)</scope>
    <scope>DEVELOPMENTAL STAGE</scope>
    <source>
        <strain>FVB/N</strain>
    </source>
</reference>
<reference key="2">
    <citation type="journal article" date="2005" name="Science">
        <title>The transcriptional landscape of the mammalian genome.</title>
        <authorList>
            <person name="Carninci P."/>
            <person name="Kasukawa T."/>
            <person name="Katayama S."/>
            <person name="Gough J."/>
            <person name="Frith M.C."/>
            <person name="Maeda N."/>
            <person name="Oyama R."/>
            <person name="Ravasi T."/>
            <person name="Lenhard B."/>
            <person name="Wells C."/>
            <person name="Kodzius R."/>
            <person name="Shimokawa K."/>
            <person name="Bajic V.B."/>
            <person name="Brenner S.E."/>
            <person name="Batalov S."/>
            <person name="Forrest A.R."/>
            <person name="Zavolan M."/>
            <person name="Davis M.J."/>
            <person name="Wilming L.G."/>
            <person name="Aidinis V."/>
            <person name="Allen J.E."/>
            <person name="Ambesi-Impiombato A."/>
            <person name="Apweiler R."/>
            <person name="Aturaliya R.N."/>
            <person name="Bailey T.L."/>
            <person name="Bansal M."/>
            <person name="Baxter L."/>
            <person name="Beisel K.W."/>
            <person name="Bersano T."/>
            <person name="Bono H."/>
            <person name="Chalk A.M."/>
            <person name="Chiu K.P."/>
            <person name="Choudhary V."/>
            <person name="Christoffels A."/>
            <person name="Clutterbuck D.R."/>
            <person name="Crowe M.L."/>
            <person name="Dalla E."/>
            <person name="Dalrymple B.P."/>
            <person name="de Bono B."/>
            <person name="Della Gatta G."/>
            <person name="di Bernardo D."/>
            <person name="Down T."/>
            <person name="Engstrom P."/>
            <person name="Fagiolini M."/>
            <person name="Faulkner G."/>
            <person name="Fletcher C.F."/>
            <person name="Fukushima T."/>
            <person name="Furuno M."/>
            <person name="Futaki S."/>
            <person name="Gariboldi M."/>
            <person name="Georgii-Hemming P."/>
            <person name="Gingeras T.R."/>
            <person name="Gojobori T."/>
            <person name="Green R.E."/>
            <person name="Gustincich S."/>
            <person name="Harbers M."/>
            <person name="Hayashi Y."/>
            <person name="Hensch T.K."/>
            <person name="Hirokawa N."/>
            <person name="Hill D."/>
            <person name="Huminiecki L."/>
            <person name="Iacono M."/>
            <person name="Ikeo K."/>
            <person name="Iwama A."/>
            <person name="Ishikawa T."/>
            <person name="Jakt M."/>
            <person name="Kanapin A."/>
            <person name="Katoh M."/>
            <person name="Kawasawa Y."/>
            <person name="Kelso J."/>
            <person name="Kitamura H."/>
            <person name="Kitano H."/>
            <person name="Kollias G."/>
            <person name="Krishnan S.P."/>
            <person name="Kruger A."/>
            <person name="Kummerfeld S.K."/>
            <person name="Kurochkin I.V."/>
            <person name="Lareau L.F."/>
            <person name="Lazarevic D."/>
            <person name="Lipovich L."/>
            <person name="Liu J."/>
            <person name="Liuni S."/>
            <person name="McWilliam S."/>
            <person name="Madan Babu M."/>
            <person name="Madera M."/>
            <person name="Marchionni L."/>
            <person name="Matsuda H."/>
            <person name="Matsuzawa S."/>
            <person name="Miki H."/>
            <person name="Mignone F."/>
            <person name="Miyake S."/>
            <person name="Morris K."/>
            <person name="Mottagui-Tabar S."/>
            <person name="Mulder N."/>
            <person name="Nakano N."/>
            <person name="Nakauchi H."/>
            <person name="Ng P."/>
            <person name="Nilsson R."/>
            <person name="Nishiguchi S."/>
            <person name="Nishikawa S."/>
            <person name="Nori F."/>
            <person name="Ohara O."/>
            <person name="Okazaki Y."/>
            <person name="Orlando V."/>
            <person name="Pang K.C."/>
            <person name="Pavan W.J."/>
            <person name="Pavesi G."/>
            <person name="Pesole G."/>
            <person name="Petrovsky N."/>
            <person name="Piazza S."/>
            <person name="Reed J."/>
            <person name="Reid J.F."/>
            <person name="Ring B.Z."/>
            <person name="Ringwald M."/>
            <person name="Rost B."/>
            <person name="Ruan Y."/>
            <person name="Salzberg S.L."/>
            <person name="Sandelin A."/>
            <person name="Schneider C."/>
            <person name="Schoenbach C."/>
            <person name="Sekiguchi K."/>
            <person name="Semple C.A."/>
            <person name="Seno S."/>
            <person name="Sessa L."/>
            <person name="Sheng Y."/>
            <person name="Shibata Y."/>
            <person name="Shimada H."/>
            <person name="Shimada K."/>
            <person name="Silva D."/>
            <person name="Sinclair B."/>
            <person name="Sperling S."/>
            <person name="Stupka E."/>
            <person name="Sugiura K."/>
            <person name="Sultana R."/>
            <person name="Takenaka Y."/>
            <person name="Taki K."/>
            <person name="Tammoja K."/>
            <person name="Tan S.L."/>
            <person name="Tang S."/>
            <person name="Taylor M.S."/>
            <person name="Tegner J."/>
            <person name="Teichmann S.A."/>
            <person name="Ueda H.R."/>
            <person name="van Nimwegen E."/>
            <person name="Verardo R."/>
            <person name="Wei C.L."/>
            <person name="Yagi K."/>
            <person name="Yamanishi H."/>
            <person name="Zabarovsky E."/>
            <person name="Zhu S."/>
            <person name="Zimmer A."/>
            <person name="Hide W."/>
            <person name="Bult C."/>
            <person name="Grimmond S.M."/>
            <person name="Teasdale R.D."/>
            <person name="Liu E.T."/>
            <person name="Brusic V."/>
            <person name="Quackenbush J."/>
            <person name="Wahlestedt C."/>
            <person name="Mattick J.S."/>
            <person name="Hume D.A."/>
            <person name="Kai C."/>
            <person name="Sasaki D."/>
            <person name="Tomaru Y."/>
            <person name="Fukuda S."/>
            <person name="Kanamori-Katayama M."/>
            <person name="Suzuki M."/>
            <person name="Aoki J."/>
            <person name="Arakawa T."/>
            <person name="Iida J."/>
            <person name="Imamura K."/>
            <person name="Itoh M."/>
            <person name="Kato T."/>
            <person name="Kawaji H."/>
            <person name="Kawagashira N."/>
            <person name="Kawashima T."/>
            <person name="Kojima M."/>
            <person name="Kondo S."/>
            <person name="Konno H."/>
            <person name="Nakano K."/>
            <person name="Ninomiya N."/>
            <person name="Nishio T."/>
            <person name="Okada M."/>
            <person name="Plessy C."/>
            <person name="Shibata K."/>
            <person name="Shiraki T."/>
            <person name="Suzuki S."/>
            <person name="Tagami M."/>
            <person name="Waki K."/>
            <person name="Watahiki A."/>
            <person name="Okamura-Oho Y."/>
            <person name="Suzuki H."/>
            <person name="Kawai J."/>
            <person name="Hayashizaki Y."/>
        </authorList>
    </citation>
    <scope>NUCLEOTIDE SEQUENCE [LARGE SCALE MRNA] (ISOFORM 1)</scope>
    <source>
        <strain>C57BL/6J</strain>
        <tissue>Sympathetic ganglion</tissue>
        <tissue>Urinary bladder</tissue>
        <tissue>Wolffian duct</tissue>
    </source>
</reference>
<reference key="3">
    <citation type="journal article" date="2004" name="Genome Res.">
        <title>The status, quality, and expansion of the NIH full-length cDNA project: the Mammalian Gene Collection (MGC).</title>
        <authorList>
            <consortium name="The MGC Project Team"/>
        </authorList>
    </citation>
    <scope>NUCLEOTIDE SEQUENCE [LARGE SCALE MRNA] OF 35-2193 (ISOFORM 1)</scope>
    <source>
        <strain>C57BL/6J</strain>
        <tissue>Brain</tissue>
    </source>
</reference>
<reference key="4">
    <citation type="journal article" date="2005" name="FASEB J.">
        <title>Definition of the critical domains required for homophilic targeting of mouse sidekick molecules.</title>
        <authorList>
            <person name="Hayashi K."/>
            <person name="Kaufman L."/>
            <person name="Ross M.D."/>
            <person name="Klotman P.E."/>
        </authorList>
    </citation>
    <scope>SUBUNIT (ISOFORM 1 AND ISOFORM 2)</scope>
    <scope>DOMAIN</scope>
    <scope>MUTAGENESIS OF 227-GLN--ALA-232</scope>
</reference>
<reference key="5">
    <citation type="journal article" date="2010" name="Cell">
        <title>A tissue-specific atlas of mouse protein phosphorylation and expression.</title>
        <authorList>
            <person name="Huttlin E.L."/>
            <person name="Jedrychowski M.P."/>
            <person name="Elias J.E."/>
            <person name="Goswami T."/>
            <person name="Rad R."/>
            <person name="Beausoleil S.A."/>
            <person name="Villen J."/>
            <person name="Haas W."/>
            <person name="Sowa M.E."/>
            <person name="Gygi S.P."/>
        </authorList>
    </citation>
    <scope>IDENTIFICATION BY MASS SPECTROMETRY [LARGE SCALE ANALYSIS]</scope>
    <source>
        <tissue>Brain</tissue>
        <tissue>Lung</tissue>
    </source>
</reference>
<reference key="6">
    <citation type="journal article" date="2010" name="J. Neurosci.">
        <title>Synaptic localization and function of Sidekick recognition molecules require MAGI scaffolding proteins.</title>
        <authorList>
            <person name="Yamagata M."/>
            <person name="Sanes J.R."/>
        </authorList>
    </citation>
    <scope>SUBCELLULAR LOCATION</scope>
    <scope>INTERACTION WITH MAGI1; MAGI2; DLG2; DLG3 AND DLG4</scope>
</reference>
<reference key="7">
    <citation type="journal article" date="2015" name="Nature">
        <title>Sidekick 2 directs formation of a retinal circuit that detects differential motion.</title>
        <authorList>
            <person name="Krishnaswamy A."/>
            <person name="Yamagata M."/>
            <person name="Duan X."/>
            <person name="Hong Y.K."/>
            <person name="Sanes J.R."/>
        </authorList>
    </citation>
    <scope>TISSUE SPECIFICITY</scope>
</reference>